<gene>
    <name type="primary">LBD2</name>
    <name type="synonym">ASL32</name>
    <name type="ordered locus">At1g06280</name>
    <name type="ORF">F9P14.14</name>
</gene>
<accession>Q9LNB9</accession>
<accession>B7XG86</accession>
<sequence>MMQRNSNNTSITSNISNNSSSHQACASCKHQRKKCNNECILSPYFPARKTKEFQAVHKVFGVSNVQKMVRTVREEDRTKLSDSLTWEALWRQKDPVLGSYGEYRRICEELKLYKSLVHNQPLIGWDNNQRVFNNNSNNKNGLAMTNSSGSGGFSVNNNGVGVNREIVNGGYASRNVQGGWENLKHDQRQQCYAVINNGFKQHYLPL</sequence>
<protein>
    <recommendedName>
        <fullName>LOB domain-containing protein 2</fullName>
    </recommendedName>
    <alternativeName>
        <fullName>ASYMMETRIC LEAVES 2-like protein 32</fullName>
        <shortName>AS2-like protein 32</shortName>
    </alternativeName>
</protein>
<reference key="1">
    <citation type="journal article" date="2009" name="Plant J.">
        <title>Characterization of genes in the ASYMMETRIC LEAVES2/LATERAL ORGAN BOUNDARIES (AS2/LOB) family in Arabidopsis thaliana, and functional and molecular comparisons between AS2 and other family members.</title>
        <authorList>
            <person name="Matsumura Y."/>
            <person name="Iwakawa H."/>
            <person name="Machida Y."/>
            <person name="Machida C."/>
        </authorList>
    </citation>
    <scope>NUCLEOTIDE SEQUENCE [MRNA]</scope>
    <source>
        <strain>cv. Columbia</strain>
    </source>
</reference>
<reference key="2">
    <citation type="journal article" date="2000" name="Nature">
        <title>Sequence and analysis of chromosome 1 of the plant Arabidopsis thaliana.</title>
        <authorList>
            <person name="Theologis A."/>
            <person name="Ecker J.R."/>
            <person name="Palm C.J."/>
            <person name="Federspiel N.A."/>
            <person name="Kaul S."/>
            <person name="White O."/>
            <person name="Alonso J."/>
            <person name="Altafi H."/>
            <person name="Araujo R."/>
            <person name="Bowman C.L."/>
            <person name="Brooks S.Y."/>
            <person name="Buehler E."/>
            <person name="Chan A."/>
            <person name="Chao Q."/>
            <person name="Chen H."/>
            <person name="Cheuk R.F."/>
            <person name="Chin C.W."/>
            <person name="Chung M.K."/>
            <person name="Conn L."/>
            <person name="Conway A.B."/>
            <person name="Conway A.R."/>
            <person name="Creasy T.H."/>
            <person name="Dewar K."/>
            <person name="Dunn P."/>
            <person name="Etgu P."/>
            <person name="Feldblyum T.V."/>
            <person name="Feng J.-D."/>
            <person name="Fong B."/>
            <person name="Fujii C.Y."/>
            <person name="Gill J.E."/>
            <person name="Goldsmith A.D."/>
            <person name="Haas B."/>
            <person name="Hansen N.F."/>
            <person name="Hughes B."/>
            <person name="Huizar L."/>
            <person name="Hunter J.L."/>
            <person name="Jenkins J."/>
            <person name="Johnson-Hopson C."/>
            <person name="Khan S."/>
            <person name="Khaykin E."/>
            <person name="Kim C.J."/>
            <person name="Koo H.L."/>
            <person name="Kremenetskaia I."/>
            <person name="Kurtz D.B."/>
            <person name="Kwan A."/>
            <person name="Lam B."/>
            <person name="Langin-Hooper S."/>
            <person name="Lee A."/>
            <person name="Lee J.M."/>
            <person name="Lenz C.A."/>
            <person name="Li J.H."/>
            <person name="Li Y.-P."/>
            <person name="Lin X."/>
            <person name="Liu S.X."/>
            <person name="Liu Z.A."/>
            <person name="Luros J.S."/>
            <person name="Maiti R."/>
            <person name="Marziali A."/>
            <person name="Militscher J."/>
            <person name="Miranda M."/>
            <person name="Nguyen M."/>
            <person name="Nierman W.C."/>
            <person name="Osborne B.I."/>
            <person name="Pai G."/>
            <person name="Peterson J."/>
            <person name="Pham P.K."/>
            <person name="Rizzo M."/>
            <person name="Rooney T."/>
            <person name="Rowley D."/>
            <person name="Sakano H."/>
            <person name="Salzberg S.L."/>
            <person name="Schwartz J.R."/>
            <person name="Shinn P."/>
            <person name="Southwick A.M."/>
            <person name="Sun H."/>
            <person name="Tallon L.J."/>
            <person name="Tambunga G."/>
            <person name="Toriumi M.J."/>
            <person name="Town C.D."/>
            <person name="Utterback T."/>
            <person name="Van Aken S."/>
            <person name="Vaysberg M."/>
            <person name="Vysotskaia V.S."/>
            <person name="Walker M."/>
            <person name="Wu D."/>
            <person name="Yu G."/>
            <person name="Fraser C.M."/>
            <person name="Venter J.C."/>
            <person name="Davis R.W."/>
        </authorList>
    </citation>
    <scope>NUCLEOTIDE SEQUENCE [LARGE SCALE GENOMIC DNA]</scope>
    <source>
        <strain>cv. Columbia</strain>
    </source>
</reference>
<reference key="3">
    <citation type="journal article" date="2017" name="Plant J.">
        <title>Araport11: a complete reannotation of the Arabidopsis thaliana reference genome.</title>
        <authorList>
            <person name="Cheng C.Y."/>
            <person name="Krishnakumar V."/>
            <person name="Chan A.P."/>
            <person name="Thibaud-Nissen F."/>
            <person name="Schobel S."/>
            <person name="Town C.D."/>
        </authorList>
    </citation>
    <scope>GENOME REANNOTATION</scope>
    <source>
        <strain>cv. Columbia</strain>
    </source>
</reference>
<reference key="4">
    <citation type="journal article" date="2002" name="Plant Physiol.">
        <title>The LATERAL ORGAN BOUNDARIES gene defines a novel, plant-specific gene family.</title>
        <authorList>
            <person name="Shuai B."/>
            <person name="Reynaga-Pena C.G."/>
            <person name="Springer P.S."/>
        </authorList>
    </citation>
    <scope>GENE FAMILY</scope>
    <scope>NOMENCLATURE</scope>
</reference>
<reference key="5">
    <citation type="journal article" date="2002" name="Plant Cell Physiol.">
        <title>The ASYMMETRIC LEAVES2 gene of Arabidopsis thaliana, required for formation of a symmetric flat leaf lamina, encodes a member of a novel family of proteins characterized by cysteine repeats and a leucine zipper.</title>
        <authorList>
            <person name="Iwakawa H."/>
            <person name="Ueno Y."/>
            <person name="Semiarti E."/>
            <person name="Onouchi H."/>
            <person name="Kojima S."/>
            <person name="Tsukaya H."/>
            <person name="Hasebe M."/>
            <person name="Soma T."/>
            <person name="Ikezaki M."/>
            <person name="Machida C."/>
            <person name="Machida Y."/>
        </authorList>
    </citation>
    <scope>GENE FAMILY</scope>
    <scope>NOMENCLATURE</scope>
</reference>
<name>LBD2_ARATH</name>
<proteinExistence type="evidence at transcript level"/>
<evidence type="ECO:0000255" key="1">
    <source>
        <dbReference type="PROSITE-ProRule" id="PRU00291"/>
    </source>
</evidence>
<evidence type="ECO:0000256" key="2">
    <source>
        <dbReference type="SAM" id="MobiDB-lite"/>
    </source>
</evidence>
<evidence type="ECO:0000305" key="3"/>
<comment type="similarity">
    <text evidence="3">Belongs to the LOB domain-containing protein family.</text>
</comment>
<comment type="sequence caution" evidence="3">
    <conflict type="erroneous initiation">
        <sequence resource="EMBL-CDS" id="AAF80225"/>
    </conflict>
</comment>
<organism>
    <name type="scientific">Arabidopsis thaliana</name>
    <name type="common">Mouse-ear cress</name>
    <dbReference type="NCBI Taxonomy" id="3702"/>
    <lineage>
        <taxon>Eukaryota</taxon>
        <taxon>Viridiplantae</taxon>
        <taxon>Streptophyta</taxon>
        <taxon>Embryophyta</taxon>
        <taxon>Tracheophyta</taxon>
        <taxon>Spermatophyta</taxon>
        <taxon>Magnoliopsida</taxon>
        <taxon>eudicotyledons</taxon>
        <taxon>Gunneridae</taxon>
        <taxon>Pentapetalae</taxon>
        <taxon>rosids</taxon>
        <taxon>malvids</taxon>
        <taxon>Brassicales</taxon>
        <taxon>Brassicaceae</taxon>
        <taxon>Camelineae</taxon>
        <taxon>Arabidopsis</taxon>
    </lineage>
</organism>
<keyword id="KW-1185">Reference proteome</keyword>
<feature type="chain" id="PRO_0000132253" description="LOB domain-containing protein 2">
    <location>
        <begin position="1"/>
        <end position="206"/>
    </location>
</feature>
<feature type="domain" description="LOB" evidence="1">
    <location>
        <begin position="23"/>
        <end position="123"/>
    </location>
</feature>
<feature type="region of interest" description="Disordered" evidence="2">
    <location>
        <begin position="1"/>
        <end position="20"/>
    </location>
</feature>
<dbReference type="EMBL" id="AB473865">
    <property type="protein sequence ID" value="BAH10576.1"/>
    <property type="molecule type" value="mRNA"/>
</dbReference>
<dbReference type="EMBL" id="AC025290">
    <property type="protein sequence ID" value="AAF80225.1"/>
    <property type="status" value="ALT_INIT"/>
    <property type="molecule type" value="Genomic_DNA"/>
</dbReference>
<dbReference type="EMBL" id="CP002684">
    <property type="protein sequence ID" value="AEE27971.1"/>
    <property type="molecule type" value="Genomic_DNA"/>
</dbReference>
<dbReference type="PIR" id="F86198">
    <property type="entry name" value="F86198"/>
</dbReference>
<dbReference type="RefSeq" id="NP_172118.1">
    <property type="nucleotide sequence ID" value="NM_100510.4"/>
</dbReference>
<dbReference type="SMR" id="Q9LNB9"/>
<dbReference type="STRING" id="3702.Q9LNB9"/>
<dbReference type="iPTMnet" id="Q9LNB9"/>
<dbReference type="PaxDb" id="3702-AT1G06280.1"/>
<dbReference type="EnsemblPlants" id="AT1G06280.1">
    <property type="protein sequence ID" value="AT1G06280.1"/>
    <property type="gene ID" value="AT1G06280"/>
</dbReference>
<dbReference type="GeneID" id="837139"/>
<dbReference type="Gramene" id="AT1G06280.1">
    <property type="protein sequence ID" value="AT1G06280.1"/>
    <property type="gene ID" value="AT1G06280"/>
</dbReference>
<dbReference type="KEGG" id="ath:AT1G06280"/>
<dbReference type="Araport" id="AT1G06280"/>
<dbReference type="TAIR" id="AT1G06280">
    <property type="gene designation" value="LBD2"/>
</dbReference>
<dbReference type="eggNOG" id="ENOG502S1XJ">
    <property type="taxonomic scope" value="Eukaryota"/>
</dbReference>
<dbReference type="HOGENOM" id="CLU_106065_0_0_1"/>
<dbReference type="InParanoid" id="Q9LNB9"/>
<dbReference type="OMA" id="DNNQRVF"/>
<dbReference type="PRO" id="PR:Q9LNB9"/>
<dbReference type="Proteomes" id="UP000006548">
    <property type="component" value="Chromosome 1"/>
</dbReference>
<dbReference type="ExpressionAtlas" id="Q9LNB9">
    <property type="expression patterns" value="baseline and differential"/>
</dbReference>
<dbReference type="InterPro" id="IPR004883">
    <property type="entry name" value="LOB"/>
</dbReference>
<dbReference type="PANTHER" id="PTHR31301:SF19">
    <property type="entry name" value="LOB DOMAIN-CONTAINING PROTEIN 2"/>
    <property type="match status" value="1"/>
</dbReference>
<dbReference type="PANTHER" id="PTHR31301">
    <property type="entry name" value="LOB DOMAIN-CONTAINING PROTEIN 4-RELATED"/>
    <property type="match status" value="1"/>
</dbReference>
<dbReference type="Pfam" id="PF03195">
    <property type="entry name" value="LOB"/>
    <property type="match status" value="1"/>
</dbReference>
<dbReference type="PROSITE" id="PS50891">
    <property type="entry name" value="LOB"/>
    <property type="match status" value="1"/>
</dbReference>